<protein>
    <recommendedName>
        <fullName evidence="1">Small ribosomal subunit protein uS13</fullName>
    </recommendedName>
    <alternativeName>
        <fullName evidence="3">30S ribosomal protein S13</fullName>
    </alternativeName>
</protein>
<feature type="chain" id="PRO_1000214402" description="Small ribosomal subunit protein uS13">
    <location>
        <begin position="1"/>
        <end position="118"/>
    </location>
</feature>
<feature type="region of interest" description="Disordered" evidence="2">
    <location>
        <begin position="92"/>
        <end position="118"/>
    </location>
</feature>
<comment type="function">
    <text evidence="1">Located at the top of the head of the 30S subunit, it contacts several helices of the 16S rRNA. In the 70S ribosome it contacts the 23S rRNA (bridge B1a) and protein L5 of the 50S subunit (bridge B1b), connecting the 2 subunits; these bridges are implicated in subunit movement. Contacts the tRNAs in the A and P-sites.</text>
</comment>
<comment type="subunit">
    <text evidence="1">Part of the 30S ribosomal subunit. Forms a loose heterodimer with protein S19. Forms two bridges to the 50S subunit in the 70S ribosome.</text>
</comment>
<comment type="similarity">
    <text evidence="1">Belongs to the universal ribosomal protein uS13 family.</text>
</comment>
<evidence type="ECO:0000255" key="1">
    <source>
        <dbReference type="HAMAP-Rule" id="MF_01315"/>
    </source>
</evidence>
<evidence type="ECO:0000256" key="2">
    <source>
        <dbReference type="SAM" id="MobiDB-lite"/>
    </source>
</evidence>
<evidence type="ECO:0000305" key="3"/>
<accession>C6DFS6</accession>
<organism>
    <name type="scientific">Pectobacterium carotovorum subsp. carotovorum (strain PC1)</name>
    <dbReference type="NCBI Taxonomy" id="561230"/>
    <lineage>
        <taxon>Bacteria</taxon>
        <taxon>Pseudomonadati</taxon>
        <taxon>Pseudomonadota</taxon>
        <taxon>Gammaproteobacteria</taxon>
        <taxon>Enterobacterales</taxon>
        <taxon>Pectobacteriaceae</taxon>
        <taxon>Pectobacterium</taxon>
    </lineage>
</organism>
<reference key="1">
    <citation type="submission" date="2009-07" db="EMBL/GenBank/DDBJ databases">
        <title>Complete sequence of Pectobacterium carotovorum subsp. carotovorum PC1.</title>
        <authorList>
            <consortium name="US DOE Joint Genome Institute"/>
            <person name="Lucas S."/>
            <person name="Copeland A."/>
            <person name="Lapidus A."/>
            <person name="Glavina del Rio T."/>
            <person name="Tice H."/>
            <person name="Bruce D."/>
            <person name="Goodwin L."/>
            <person name="Pitluck S."/>
            <person name="Munk A.C."/>
            <person name="Brettin T."/>
            <person name="Detter J.C."/>
            <person name="Han C."/>
            <person name="Tapia R."/>
            <person name="Larimer F."/>
            <person name="Land M."/>
            <person name="Hauser L."/>
            <person name="Kyrpides N."/>
            <person name="Mikhailova N."/>
            <person name="Balakrishnan V."/>
            <person name="Glasner J."/>
            <person name="Perna N.T."/>
        </authorList>
    </citation>
    <scope>NUCLEOTIDE SEQUENCE [LARGE SCALE GENOMIC DNA]</scope>
    <source>
        <strain>PC1</strain>
    </source>
</reference>
<gene>
    <name evidence="1" type="primary">rpsM</name>
    <name type="ordered locus">PC1_3800</name>
</gene>
<keyword id="KW-0687">Ribonucleoprotein</keyword>
<keyword id="KW-0689">Ribosomal protein</keyword>
<keyword id="KW-0694">RNA-binding</keyword>
<keyword id="KW-0699">rRNA-binding</keyword>
<keyword id="KW-0820">tRNA-binding</keyword>
<name>RS13_PECCP</name>
<proteinExistence type="inferred from homology"/>
<sequence>MARIAGINIPDHKHTVIALTSIFGIGKTRSQAICAATGIAEDVKISELSEEQIDKLRDEVAKFVVEGDLRREVTLSIKRLMDLGTYRGLRHRRGLPVRGQRTKTNARTRKGPRKPIKK</sequence>
<dbReference type="EMBL" id="CP001657">
    <property type="protein sequence ID" value="ACT14815.1"/>
    <property type="molecule type" value="Genomic_DNA"/>
</dbReference>
<dbReference type="RefSeq" id="WP_010286058.1">
    <property type="nucleotide sequence ID" value="NC_012917.1"/>
</dbReference>
<dbReference type="SMR" id="C6DFS6"/>
<dbReference type="STRING" id="561230.PC1_3800"/>
<dbReference type="GeneID" id="67792303"/>
<dbReference type="KEGG" id="pct:PC1_3800"/>
<dbReference type="eggNOG" id="COG0099">
    <property type="taxonomic scope" value="Bacteria"/>
</dbReference>
<dbReference type="HOGENOM" id="CLU_103849_1_2_6"/>
<dbReference type="OrthoDB" id="9803610at2"/>
<dbReference type="Proteomes" id="UP000002736">
    <property type="component" value="Chromosome"/>
</dbReference>
<dbReference type="GO" id="GO:0005829">
    <property type="term" value="C:cytosol"/>
    <property type="evidence" value="ECO:0007669"/>
    <property type="project" value="TreeGrafter"/>
</dbReference>
<dbReference type="GO" id="GO:0015935">
    <property type="term" value="C:small ribosomal subunit"/>
    <property type="evidence" value="ECO:0007669"/>
    <property type="project" value="TreeGrafter"/>
</dbReference>
<dbReference type="GO" id="GO:0019843">
    <property type="term" value="F:rRNA binding"/>
    <property type="evidence" value="ECO:0007669"/>
    <property type="project" value="UniProtKB-UniRule"/>
</dbReference>
<dbReference type="GO" id="GO:0003735">
    <property type="term" value="F:structural constituent of ribosome"/>
    <property type="evidence" value="ECO:0007669"/>
    <property type="project" value="InterPro"/>
</dbReference>
<dbReference type="GO" id="GO:0000049">
    <property type="term" value="F:tRNA binding"/>
    <property type="evidence" value="ECO:0007669"/>
    <property type="project" value="UniProtKB-UniRule"/>
</dbReference>
<dbReference type="GO" id="GO:0006412">
    <property type="term" value="P:translation"/>
    <property type="evidence" value="ECO:0007669"/>
    <property type="project" value="UniProtKB-UniRule"/>
</dbReference>
<dbReference type="FunFam" id="1.10.8.50:FF:000001">
    <property type="entry name" value="30S ribosomal protein S13"/>
    <property type="match status" value="1"/>
</dbReference>
<dbReference type="FunFam" id="4.10.910.10:FF:000001">
    <property type="entry name" value="30S ribosomal protein S13"/>
    <property type="match status" value="1"/>
</dbReference>
<dbReference type="Gene3D" id="1.10.8.50">
    <property type="match status" value="1"/>
</dbReference>
<dbReference type="Gene3D" id="4.10.910.10">
    <property type="entry name" value="30s ribosomal protein s13, domain 2"/>
    <property type="match status" value="1"/>
</dbReference>
<dbReference type="HAMAP" id="MF_01315">
    <property type="entry name" value="Ribosomal_uS13"/>
    <property type="match status" value="1"/>
</dbReference>
<dbReference type="InterPro" id="IPR027437">
    <property type="entry name" value="Rbsml_uS13_C"/>
</dbReference>
<dbReference type="InterPro" id="IPR001892">
    <property type="entry name" value="Ribosomal_uS13"/>
</dbReference>
<dbReference type="InterPro" id="IPR010979">
    <property type="entry name" value="Ribosomal_uS13-like_H2TH"/>
</dbReference>
<dbReference type="InterPro" id="IPR019980">
    <property type="entry name" value="Ribosomal_uS13_bac-type"/>
</dbReference>
<dbReference type="InterPro" id="IPR018269">
    <property type="entry name" value="Ribosomal_uS13_CS"/>
</dbReference>
<dbReference type="NCBIfam" id="TIGR03631">
    <property type="entry name" value="uS13_bact"/>
    <property type="match status" value="1"/>
</dbReference>
<dbReference type="PANTHER" id="PTHR10871">
    <property type="entry name" value="30S RIBOSOMAL PROTEIN S13/40S RIBOSOMAL PROTEIN S18"/>
    <property type="match status" value="1"/>
</dbReference>
<dbReference type="PANTHER" id="PTHR10871:SF1">
    <property type="entry name" value="SMALL RIBOSOMAL SUBUNIT PROTEIN US13M"/>
    <property type="match status" value="1"/>
</dbReference>
<dbReference type="Pfam" id="PF00416">
    <property type="entry name" value="Ribosomal_S13"/>
    <property type="match status" value="1"/>
</dbReference>
<dbReference type="PIRSF" id="PIRSF002134">
    <property type="entry name" value="Ribosomal_S13"/>
    <property type="match status" value="1"/>
</dbReference>
<dbReference type="SUPFAM" id="SSF46946">
    <property type="entry name" value="S13-like H2TH domain"/>
    <property type="match status" value="1"/>
</dbReference>
<dbReference type="PROSITE" id="PS00646">
    <property type="entry name" value="RIBOSOMAL_S13_1"/>
    <property type="match status" value="1"/>
</dbReference>
<dbReference type="PROSITE" id="PS50159">
    <property type="entry name" value="RIBOSOMAL_S13_2"/>
    <property type="match status" value="1"/>
</dbReference>